<reference key="1">
    <citation type="journal article" date="2011" name="PLoS Genet.">
        <title>Genomic analysis of the necrotrophic fungal pathogens Sclerotinia sclerotiorum and Botrytis cinerea.</title>
        <authorList>
            <person name="Amselem J."/>
            <person name="Cuomo C.A."/>
            <person name="van Kan J.A.L."/>
            <person name="Viaud M."/>
            <person name="Benito E.P."/>
            <person name="Couloux A."/>
            <person name="Coutinho P.M."/>
            <person name="de Vries R.P."/>
            <person name="Dyer P.S."/>
            <person name="Fillinger S."/>
            <person name="Fournier E."/>
            <person name="Gout L."/>
            <person name="Hahn M."/>
            <person name="Kohn L."/>
            <person name="Lapalu N."/>
            <person name="Plummer K.M."/>
            <person name="Pradier J.-M."/>
            <person name="Quevillon E."/>
            <person name="Sharon A."/>
            <person name="Simon A."/>
            <person name="ten Have A."/>
            <person name="Tudzynski B."/>
            <person name="Tudzynski P."/>
            <person name="Wincker P."/>
            <person name="Andrew M."/>
            <person name="Anthouard V."/>
            <person name="Beever R.E."/>
            <person name="Beffa R."/>
            <person name="Benoit I."/>
            <person name="Bouzid O."/>
            <person name="Brault B."/>
            <person name="Chen Z."/>
            <person name="Choquer M."/>
            <person name="Collemare J."/>
            <person name="Cotton P."/>
            <person name="Danchin E.G."/>
            <person name="Da Silva C."/>
            <person name="Gautier A."/>
            <person name="Giraud C."/>
            <person name="Giraud T."/>
            <person name="Gonzalez C."/>
            <person name="Grossetete S."/>
            <person name="Gueldener U."/>
            <person name="Henrissat B."/>
            <person name="Howlett B.J."/>
            <person name="Kodira C."/>
            <person name="Kretschmer M."/>
            <person name="Lappartient A."/>
            <person name="Leroch M."/>
            <person name="Levis C."/>
            <person name="Mauceli E."/>
            <person name="Neuveglise C."/>
            <person name="Oeser B."/>
            <person name="Pearson M."/>
            <person name="Poulain J."/>
            <person name="Poussereau N."/>
            <person name="Quesneville H."/>
            <person name="Rascle C."/>
            <person name="Schumacher J."/>
            <person name="Segurens B."/>
            <person name="Sexton A."/>
            <person name="Silva E."/>
            <person name="Sirven C."/>
            <person name="Soanes D.M."/>
            <person name="Talbot N.J."/>
            <person name="Templeton M."/>
            <person name="Yandava C."/>
            <person name="Yarden O."/>
            <person name="Zeng Q."/>
            <person name="Rollins J.A."/>
            <person name="Lebrun M.-H."/>
            <person name="Dickman M."/>
        </authorList>
    </citation>
    <scope>NUCLEOTIDE SEQUENCE [LARGE SCALE GENOMIC DNA]</scope>
    <source>
        <strain>B05.10</strain>
    </source>
</reference>
<reference key="2">
    <citation type="journal article" date="2012" name="Eukaryot. Cell">
        <title>Genome update of Botrytis cinerea strains B05.10 and T4.</title>
        <authorList>
            <person name="Staats M."/>
            <person name="van Kan J.A.L."/>
        </authorList>
    </citation>
    <scope>NUCLEOTIDE SEQUENCE [LARGE SCALE GENOMIC DNA]</scope>
    <scope>GENOME REANNOTATION</scope>
    <source>
        <strain>B05.10</strain>
    </source>
</reference>
<reference key="3">
    <citation type="journal article" date="2017" name="Mol. Plant Pathol.">
        <title>A gapless genome sequence of the fungus Botrytis cinerea.</title>
        <authorList>
            <person name="van Kan J.A.L."/>
            <person name="Stassen J.H.M."/>
            <person name="Mosbach A."/>
            <person name="van der Lee T.A.J."/>
            <person name="Faino L."/>
            <person name="Farmer A.D."/>
            <person name="Papasotiriou D.G."/>
            <person name="Zhou S."/>
            <person name="Seidl M.F."/>
            <person name="Cottam E."/>
            <person name="Edel D."/>
            <person name="Hahn M."/>
            <person name="Schwartz D.C."/>
            <person name="Dietrich R.A."/>
            <person name="Widdison S."/>
            <person name="Scalliet G."/>
        </authorList>
    </citation>
    <scope>NUCLEOTIDE SEQUENCE [LARGE SCALE GENOMIC DNA]</scope>
    <scope>GENOME REANNOTATION</scope>
    <source>
        <strain>B05.10</strain>
    </source>
</reference>
<sequence>MAKVLFSLFSFLFLIIGVSAQFQFFEQMFNGQQQQHQRQPQDVPSDSQWYQDNYDRAHCTSYLCPGTLSCVAFPHHCPCAHPTYEEKFELADGNAICISKGGFKAGEAARKVELARKGLI</sequence>
<keyword id="KW-1185">Reference proteome</keyword>
<keyword id="KW-0732">Signal</keyword>
<protein>
    <recommendedName>
        <fullName>Long chronological lifespan protein 2</fullName>
    </recommendedName>
</protein>
<comment type="function">
    <text evidence="1">Probable component of the endoplasmic reticulum-associated degradation (ERAD) pathway.</text>
</comment>
<comment type="similarity">
    <text evidence="3">Belongs to the LCL2 family.</text>
</comment>
<evidence type="ECO:0000250" key="1"/>
<evidence type="ECO:0000255" key="2"/>
<evidence type="ECO:0000305" key="3"/>
<proteinExistence type="inferred from homology"/>
<name>LCL2_BOTFB</name>
<feature type="signal peptide" evidence="2">
    <location>
        <begin position="1"/>
        <end position="20"/>
    </location>
</feature>
<feature type="chain" id="PRO_0000408597" description="Long chronological lifespan protein 2">
    <location>
        <begin position="21"/>
        <end position="120"/>
    </location>
</feature>
<accession>A6RPX6</accession>
<accession>A0A384J8L9</accession>
<organism>
    <name type="scientific">Botryotinia fuckeliana (strain B05.10)</name>
    <name type="common">Noble rot fungus</name>
    <name type="synonym">Botrytis cinerea</name>
    <dbReference type="NCBI Taxonomy" id="332648"/>
    <lineage>
        <taxon>Eukaryota</taxon>
        <taxon>Fungi</taxon>
        <taxon>Dikarya</taxon>
        <taxon>Ascomycota</taxon>
        <taxon>Pezizomycotina</taxon>
        <taxon>Leotiomycetes</taxon>
        <taxon>Helotiales</taxon>
        <taxon>Sclerotiniaceae</taxon>
        <taxon>Botrytis</taxon>
    </lineage>
</organism>
<gene>
    <name type="primary">lcl2</name>
    <name type="ORF">BC1G_02499</name>
    <name type="ORF">BCIN_02g02340</name>
</gene>
<dbReference type="EMBL" id="CP009806">
    <property type="protein sequence ID" value="ATZ46889.1"/>
    <property type="molecule type" value="Genomic_DNA"/>
</dbReference>
<dbReference type="RefSeq" id="XP_001558865.1">
    <property type="nucleotide sequence ID" value="XM_001558815.1"/>
</dbReference>
<dbReference type="SMR" id="A6RPX6"/>
<dbReference type="EnsemblFungi" id="Bcin02g02340.1">
    <property type="protein sequence ID" value="Bcin02p02340.1"/>
    <property type="gene ID" value="Bcin02g02340"/>
</dbReference>
<dbReference type="GeneID" id="5439491"/>
<dbReference type="KEGG" id="bfu:BCIN_02g02340"/>
<dbReference type="VEuPathDB" id="FungiDB:Bcin02g02340"/>
<dbReference type="OMA" id="DNYLCPD"/>
<dbReference type="OrthoDB" id="2234316at2759"/>
<dbReference type="Proteomes" id="UP000001798">
    <property type="component" value="Chromosome bcin02"/>
</dbReference>
<dbReference type="GO" id="GO:0036503">
    <property type="term" value="P:ERAD pathway"/>
    <property type="evidence" value="ECO:0007669"/>
    <property type="project" value="TreeGrafter"/>
</dbReference>
<dbReference type="CDD" id="cd23996">
    <property type="entry name" value="LCL2-like"/>
    <property type="match status" value="1"/>
</dbReference>
<dbReference type="InterPro" id="IPR034543">
    <property type="entry name" value="LCL2"/>
</dbReference>
<dbReference type="PANTHER" id="PTHR38425">
    <property type="entry name" value="LONG CHRONOLOGICAL LIFESPAN PROTEIN 2"/>
    <property type="match status" value="1"/>
</dbReference>
<dbReference type="PANTHER" id="PTHR38425:SF1">
    <property type="entry name" value="LONG CHRONOLOGICAL LIFESPAN PROTEIN 2"/>
    <property type="match status" value="1"/>
</dbReference>